<accession>Q9MAP5</accession>
<keyword id="KW-0272">Extracellular matrix</keyword>
<keyword id="KW-0325">Glycoprotein</keyword>
<keyword id="KW-0378">Hydrolase</keyword>
<keyword id="KW-0611">Plant defense</keyword>
<keyword id="KW-0645">Protease</keyword>
<keyword id="KW-1185">Reference proteome</keyword>
<keyword id="KW-0964">Secreted</keyword>
<keyword id="KW-0720">Serine protease</keyword>
<keyword id="KW-0732">Signal</keyword>
<keyword id="KW-0865">Zymogen</keyword>
<sequence>MRSFRSSILLVLLSLITVLNATRARSETESKVHIVYLGEKKHHDPEFVTESHHQMLASLLGSKKDADDSMVYSYRHGFSGFAAKLTKSQAKKIADLPEVVHVIPDGFHELATTRTWEYLGLSSANPKNLLNDTNMGDQVIIGVIDTGVWPESESFNDNGVGPIPRKWKGGCESGENFRSTDCNRKLIGAKYFINGFLAENKGFNTTESRDYISARDFDGHGTHVASIAGGSFVPNVSYKGLAGGTLRGGAPRARIAMYKACWFHEELKGVTCSDSDIMKAIDEAIHDGVDVLSISLVGQIPLNSETDIRDEFATGLFHAVAKGIVVVCAGGNDGPAAQTVVNIAPWILTVAATTLDRSFPTPITLGNNKVILGQATYTGPELGLTSLVYPENARNNNETFSGVCESLNLNPNYTMAMKVVLCFTASRTNAAISRAASFVKAAGGLGLIISRNPVYTLSPCNDDFPCVAVDYELGTDILSYIRSTRSPVVKIQRSRTLSGQPVGTKVVNFSSRGPNSMSPAILKPDIAAPGVRILAATSPNDTLNVGGFAMLSGTSMATPVISGVIALLKALHPEWSPAAFRSAIVTTAWRTDPFGEQIFAEGSSRKVSDPFDYGGGIVNPEKAAEPGLIYDMGPQDYILYLCSAGYNDSSISQLVGQITVCSNPKPSVLDVNLPSITIPNLKDEVTLTRTVTNVGLVDSVYKVSVEPPLGVRVVVTPETLVFNSKTISVSFTVRVSTTHKINTGYYFGSLTWTDSVHNVVIPLSVRTQILQNYYDEN</sequence>
<comment type="function">
    <text evidence="4">Serine protease that plays a role in the control of the establishment of immune priming and systemic induced resistance.</text>
</comment>
<comment type="subcellular location">
    <subcellularLocation>
        <location evidence="4">Secreted</location>
        <location evidence="4">Extracellular space</location>
        <location evidence="4">Extracellular matrix</location>
    </subcellularLocation>
</comment>
<comment type="induction">
    <text evidence="4">By hydrogen peroxide and infection with the bacterial pathogen Pseudomonas syringae pv. tomato strain DC3000.</text>
</comment>
<comment type="disruption phenotype">
    <text evidence="4">No visible phenotype under normal growth conditions, but mutant plants have enhanced disease susceptibility to the pathogens P.syringae DC3000 and Hyaloperonospora arabidopsidis.</text>
</comment>
<comment type="miscellaneous">
    <text evidence="4">Plants over-expressing SBT3.3 show enhanced disease resistance and enhanced activation of MPK3, MPK4, MPK6, MPK11 and OXI1.</text>
</comment>
<comment type="similarity">
    <text evidence="6">Belongs to the peptidase S8 family.</text>
</comment>
<gene>
    <name evidence="5" type="primary">SBT3.3</name>
    <name evidence="8" type="ordered locus">At1g32960</name>
    <name evidence="9" type="ORF">F9L11.13</name>
</gene>
<evidence type="ECO:0000255" key="1"/>
<evidence type="ECO:0000255" key="2">
    <source>
        <dbReference type="PROSITE-ProRule" id="PRU00498"/>
    </source>
</evidence>
<evidence type="ECO:0000255" key="3">
    <source>
        <dbReference type="PROSITE-ProRule" id="PRU01240"/>
    </source>
</evidence>
<evidence type="ECO:0000269" key="4">
    <source>
    </source>
</evidence>
<evidence type="ECO:0000303" key="5">
    <source>
    </source>
</evidence>
<evidence type="ECO:0000305" key="6"/>
<evidence type="ECO:0000305" key="7">
    <source>
    </source>
</evidence>
<evidence type="ECO:0000312" key="8">
    <source>
        <dbReference type="Araport" id="AT1G32960"/>
    </source>
</evidence>
<evidence type="ECO:0000312" key="9">
    <source>
        <dbReference type="EMBL" id="AAF31276.1"/>
    </source>
</evidence>
<feature type="signal peptide" evidence="1">
    <location>
        <begin position="1"/>
        <end position="24"/>
    </location>
</feature>
<feature type="propeptide" id="PRO_0000430827" description="Removed in mature form" evidence="7">
    <location>
        <begin position="25"/>
        <end position="111"/>
    </location>
</feature>
<feature type="chain" id="PRO_0000430828" description="Subtilisin-like protease SBT3.3" evidence="7">
    <location>
        <begin position="112"/>
        <end position="777"/>
    </location>
</feature>
<feature type="domain" description="Inhibitor I9" evidence="1">
    <location>
        <begin position="32"/>
        <end position="109"/>
    </location>
</feature>
<feature type="domain" description="Peptidase S8" evidence="3">
    <location>
        <begin position="115"/>
        <end position="624"/>
    </location>
</feature>
<feature type="domain" description="PA" evidence="1">
    <location>
        <begin position="403"/>
        <end position="481"/>
    </location>
</feature>
<feature type="active site" description="Charge relay system" evidence="3">
    <location>
        <position position="145"/>
    </location>
</feature>
<feature type="active site" description="Charge relay system" evidence="3">
    <location>
        <position position="220"/>
    </location>
</feature>
<feature type="active site" description="Charge relay system" evidence="3">
    <location>
        <position position="555"/>
    </location>
</feature>
<feature type="glycosylation site" description="N-linked (GlcNAc...) asparagine" evidence="2">
    <location>
        <position position="131"/>
    </location>
</feature>
<feature type="glycosylation site" description="N-linked (GlcNAc...) asparagine" evidence="2">
    <location>
        <position position="204"/>
    </location>
</feature>
<feature type="glycosylation site" description="N-linked (GlcNAc...) asparagine" evidence="2">
    <location>
        <position position="235"/>
    </location>
</feature>
<feature type="glycosylation site" description="N-linked (GlcNAc...) asparagine" evidence="2">
    <location>
        <position position="397"/>
    </location>
</feature>
<feature type="glycosylation site" description="N-linked (GlcNAc...) asparagine" evidence="2">
    <location>
        <position position="412"/>
    </location>
</feature>
<feature type="glycosylation site" description="N-linked (GlcNAc...) asparagine" evidence="2">
    <location>
        <position position="508"/>
    </location>
</feature>
<feature type="glycosylation site" description="N-linked (GlcNAc...) asparagine" evidence="2">
    <location>
        <position position="540"/>
    </location>
</feature>
<feature type="glycosylation site" description="N-linked (GlcNAc...) asparagine" evidence="2">
    <location>
        <position position="647"/>
    </location>
</feature>
<reference key="1">
    <citation type="journal article" date="2000" name="Nature">
        <title>Sequence and analysis of chromosome 1 of the plant Arabidopsis thaliana.</title>
        <authorList>
            <person name="Theologis A."/>
            <person name="Ecker J.R."/>
            <person name="Palm C.J."/>
            <person name="Federspiel N.A."/>
            <person name="Kaul S."/>
            <person name="White O."/>
            <person name="Alonso J."/>
            <person name="Altafi H."/>
            <person name="Araujo R."/>
            <person name="Bowman C.L."/>
            <person name="Brooks S.Y."/>
            <person name="Buehler E."/>
            <person name="Chan A."/>
            <person name="Chao Q."/>
            <person name="Chen H."/>
            <person name="Cheuk R.F."/>
            <person name="Chin C.W."/>
            <person name="Chung M.K."/>
            <person name="Conn L."/>
            <person name="Conway A.B."/>
            <person name="Conway A.R."/>
            <person name="Creasy T.H."/>
            <person name="Dewar K."/>
            <person name="Dunn P."/>
            <person name="Etgu P."/>
            <person name="Feldblyum T.V."/>
            <person name="Feng J.-D."/>
            <person name="Fong B."/>
            <person name="Fujii C.Y."/>
            <person name="Gill J.E."/>
            <person name="Goldsmith A.D."/>
            <person name="Haas B."/>
            <person name="Hansen N.F."/>
            <person name="Hughes B."/>
            <person name="Huizar L."/>
            <person name="Hunter J.L."/>
            <person name="Jenkins J."/>
            <person name="Johnson-Hopson C."/>
            <person name="Khan S."/>
            <person name="Khaykin E."/>
            <person name="Kim C.J."/>
            <person name="Koo H.L."/>
            <person name="Kremenetskaia I."/>
            <person name="Kurtz D.B."/>
            <person name="Kwan A."/>
            <person name="Lam B."/>
            <person name="Langin-Hooper S."/>
            <person name="Lee A."/>
            <person name="Lee J.M."/>
            <person name="Lenz C.A."/>
            <person name="Li J.H."/>
            <person name="Li Y.-P."/>
            <person name="Lin X."/>
            <person name="Liu S.X."/>
            <person name="Liu Z.A."/>
            <person name="Luros J.S."/>
            <person name="Maiti R."/>
            <person name="Marziali A."/>
            <person name="Militscher J."/>
            <person name="Miranda M."/>
            <person name="Nguyen M."/>
            <person name="Nierman W.C."/>
            <person name="Osborne B.I."/>
            <person name="Pai G."/>
            <person name="Peterson J."/>
            <person name="Pham P.K."/>
            <person name="Rizzo M."/>
            <person name="Rooney T."/>
            <person name="Rowley D."/>
            <person name="Sakano H."/>
            <person name="Salzberg S.L."/>
            <person name="Schwartz J.R."/>
            <person name="Shinn P."/>
            <person name="Southwick A.M."/>
            <person name="Sun H."/>
            <person name="Tallon L.J."/>
            <person name="Tambunga G."/>
            <person name="Toriumi M.J."/>
            <person name="Town C.D."/>
            <person name="Utterback T."/>
            <person name="Van Aken S."/>
            <person name="Vaysberg M."/>
            <person name="Vysotskaia V.S."/>
            <person name="Walker M."/>
            <person name="Wu D."/>
            <person name="Yu G."/>
            <person name="Fraser C.M."/>
            <person name="Venter J.C."/>
            <person name="Davis R.W."/>
        </authorList>
    </citation>
    <scope>NUCLEOTIDE SEQUENCE [LARGE SCALE GENOMIC DNA]</scope>
    <source>
        <strain>cv. Columbia</strain>
    </source>
</reference>
<reference key="2">
    <citation type="journal article" date="2017" name="Plant J.">
        <title>Araport11: a complete reannotation of the Arabidopsis thaliana reference genome.</title>
        <authorList>
            <person name="Cheng C.Y."/>
            <person name="Krishnakumar V."/>
            <person name="Chan A.P."/>
            <person name="Thibaud-Nissen F."/>
            <person name="Schobel S."/>
            <person name="Town C.D."/>
        </authorList>
    </citation>
    <scope>GENOME REANNOTATION</scope>
    <source>
        <strain>cv. Columbia</strain>
    </source>
</reference>
<reference key="3">
    <citation type="journal article" date="2003" name="Science">
        <title>Empirical analysis of transcriptional activity in the Arabidopsis genome.</title>
        <authorList>
            <person name="Yamada K."/>
            <person name="Lim J."/>
            <person name="Dale J.M."/>
            <person name="Chen H."/>
            <person name="Shinn P."/>
            <person name="Palm C.J."/>
            <person name="Southwick A.M."/>
            <person name="Wu H.C."/>
            <person name="Kim C.J."/>
            <person name="Nguyen M."/>
            <person name="Pham P.K."/>
            <person name="Cheuk R.F."/>
            <person name="Karlin-Newmann G."/>
            <person name="Liu S.X."/>
            <person name="Lam B."/>
            <person name="Sakano H."/>
            <person name="Wu T."/>
            <person name="Yu G."/>
            <person name="Miranda M."/>
            <person name="Quach H.L."/>
            <person name="Tripp M."/>
            <person name="Chang C.H."/>
            <person name="Lee J.M."/>
            <person name="Toriumi M.J."/>
            <person name="Chan M.M."/>
            <person name="Tang C.C."/>
            <person name="Onodera C.S."/>
            <person name="Deng J.M."/>
            <person name="Akiyama K."/>
            <person name="Ansari Y."/>
            <person name="Arakawa T."/>
            <person name="Banh J."/>
            <person name="Banno F."/>
            <person name="Bowser L."/>
            <person name="Brooks S.Y."/>
            <person name="Carninci P."/>
            <person name="Chao Q."/>
            <person name="Choy N."/>
            <person name="Enju A."/>
            <person name="Goldsmith A.D."/>
            <person name="Gurjal M."/>
            <person name="Hansen N.F."/>
            <person name="Hayashizaki Y."/>
            <person name="Johnson-Hopson C."/>
            <person name="Hsuan V.W."/>
            <person name="Iida K."/>
            <person name="Karnes M."/>
            <person name="Khan S."/>
            <person name="Koesema E."/>
            <person name="Ishida J."/>
            <person name="Jiang P.X."/>
            <person name="Jones T."/>
            <person name="Kawai J."/>
            <person name="Kamiya A."/>
            <person name="Meyers C."/>
            <person name="Nakajima M."/>
            <person name="Narusaka M."/>
            <person name="Seki M."/>
            <person name="Sakurai T."/>
            <person name="Satou M."/>
            <person name="Tamse R."/>
            <person name="Vaysberg M."/>
            <person name="Wallender E.K."/>
            <person name="Wong C."/>
            <person name="Yamamura Y."/>
            <person name="Yuan S."/>
            <person name="Shinozaki K."/>
            <person name="Davis R.W."/>
            <person name="Theologis A."/>
            <person name="Ecker J.R."/>
        </authorList>
    </citation>
    <scope>NUCLEOTIDE SEQUENCE [LARGE SCALE MRNA]</scope>
    <source>
        <strain>cv. Columbia</strain>
    </source>
</reference>
<reference key="4">
    <citation type="journal article" date="2005" name="PLoS Comput. Biol.">
        <title>Inferring hypotheses on functional relationships of genes: Analysis of the Arabidopsis thaliana subtilase gene family.</title>
        <authorList>
            <person name="Rautengarten C."/>
            <person name="Steinhauser D."/>
            <person name="Bussis D."/>
            <person name="Stintzi A."/>
            <person name="Schaller A."/>
            <person name="Kopka J."/>
            <person name="Altmann T."/>
        </authorList>
    </citation>
    <scope>GENE FAMILY</scope>
    <scope>NOMENCLATURE</scope>
</reference>
<reference key="5">
    <citation type="journal article" date="2013" name="PLoS Pathog.">
        <title>An extracellular subtilase switch for immune priming in Arabidopsis.</title>
        <authorList>
            <person name="Ramirez V."/>
            <person name="Lopez A."/>
            <person name="Mauch-Mani B."/>
            <person name="Gil M.J."/>
            <person name="Vera P."/>
        </authorList>
    </citation>
    <scope>FUNCTION</scope>
    <scope>SUBCELLULAR LOCATION</scope>
    <scope>INDUCTION</scope>
    <scope>DISRUPTION PHENOTYPE</scope>
</reference>
<dbReference type="EC" id="3.4.21.-" evidence="6"/>
<dbReference type="EMBL" id="AC006424">
    <property type="protein sequence ID" value="AAF31276.1"/>
    <property type="molecule type" value="Genomic_DNA"/>
</dbReference>
<dbReference type="EMBL" id="CP002684">
    <property type="protein sequence ID" value="AEE31544.1"/>
    <property type="molecule type" value="Genomic_DNA"/>
</dbReference>
<dbReference type="EMBL" id="AY099740">
    <property type="protein sequence ID" value="AAM20591.1"/>
    <property type="molecule type" value="mRNA"/>
</dbReference>
<dbReference type="EMBL" id="BT010347">
    <property type="protein sequence ID" value="AAQ56790.1"/>
    <property type="molecule type" value="mRNA"/>
</dbReference>
<dbReference type="PIR" id="C86454">
    <property type="entry name" value="C86454"/>
</dbReference>
<dbReference type="RefSeq" id="NP_564414.2">
    <property type="nucleotide sequence ID" value="NM_103029.3"/>
</dbReference>
<dbReference type="SMR" id="Q9MAP5"/>
<dbReference type="FunCoup" id="Q9MAP5">
    <property type="interactions" value="9"/>
</dbReference>
<dbReference type="STRING" id="3702.Q9MAP5"/>
<dbReference type="MEROPS" id="S08.A35"/>
<dbReference type="GlyCosmos" id="Q9MAP5">
    <property type="glycosylation" value="8 sites, No reported glycans"/>
</dbReference>
<dbReference type="GlyGen" id="Q9MAP5">
    <property type="glycosylation" value="8 sites"/>
</dbReference>
<dbReference type="iPTMnet" id="Q9MAP5"/>
<dbReference type="PaxDb" id="3702-AT1G32960.1"/>
<dbReference type="ProteomicsDB" id="232932"/>
<dbReference type="EnsemblPlants" id="AT1G32960.1">
    <property type="protein sequence ID" value="AT1G32960.1"/>
    <property type="gene ID" value="AT1G32960"/>
</dbReference>
<dbReference type="GeneID" id="840190"/>
<dbReference type="Gramene" id="AT1G32960.1">
    <property type="protein sequence ID" value="AT1G32960.1"/>
    <property type="gene ID" value="AT1G32960"/>
</dbReference>
<dbReference type="KEGG" id="ath:AT1G32960"/>
<dbReference type="Araport" id="AT1G32960"/>
<dbReference type="TAIR" id="AT1G32960">
    <property type="gene designation" value="SBT3.3"/>
</dbReference>
<dbReference type="eggNOG" id="ENOG502QSF0">
    <property type="taxonomic scope" value="Eukaryota"/>
</dbReference>
<dbReference type="HOGENOM" id="CLU_000625_4_2_1"/>
<dbReference type="InParanoid" id="Q9MAP5"/>
<dbReference type="OMA" id="NAGGFAM"/>
<dbReference type="OrthoDB" id="206201at2759"/>
<dbReference type="PhylomeDB" id="Q9MAP5"/>
<dbReference type="PRO" id="PR:Q9MAP5"/>
<dbReference type="Proteomes" id="UP000006548">
    <property type="component" value="Chromosome 1"/>
</dbReference>
<dbReference type="ExpressionAtlas" id="Q9MAP5">
    <property type="expression patterns" value="baseline and differential"/>
</dbReference>
<dbReference type="GO" id="GO:0031012">
    <property type="term" value="C:extracellular matrix"/>
    <property type="evidence" value="ECO:0000314"/>
    <property type="project" value="UniProtKB"/>
</dbReference>
<dbReference type="GO" id="GO:0005576">
    <property type="term" value="C:extracellular region"/>
    <property type="evidence" value="ECO:0007669"/>
    <property type="project" value="UniProtKB-KW"/>
</dbReference>
<dbReference type="GO" id="GO:0009505">
    <property type="term" value="C:plant-type cell wall"/>
    <property type="evidence" value="ECO:0007005"/>
    <property type="project" value="TAIR"/>
</dbReference>
<dbReference type="GO" id="GO:0004252">
    <property type="term" value="F:serine-type endopeptidase activity"/>
    <property type="evidence" value="ECO:0000315"/>
    <property type="project" value="UniProtKB"/>
</dbReference>
<dbReference type="GO" id="GO:0009682">
    <property type="term" value="P:induced systemic resistance"/>
    <property type="evidence" value="ECO:0000315"/>
    <property type="project" value="UniProtKB"/>
</dbReference>
<dbReference type="GO" id="GO:0006508">
    <property type="term" value="P:proteolysis"/>
    <property type="evidence" value="ECO:0007669"/>
    <property type="project" value="UniProtKB-KW"/>
</dbReference>
<dbReference type="CDD" id="cd02120">
    <property type="entry name" value="PA_subtilisin_like"/>
    <property type="match status" value="1"/>
</dbReference>
<dbReference type="CDD" id="cd04852">
    <property type="entry name" value="Peptidases_S8_3"/>
    <property type="match status" value="1"/>
</dbReference>
<dbReference type="FunFam" id="2.60.40.2310:FF:000001">
    <property type="entry name" value="Subtilisin-like protease SBT1.5"/>
    <property type="match status" value="1"/>
</dbReference>
<dbReference type="FunFam" id="3.40.50.200:FF:000006">
    <property type="entry name" value="Subtilisin-like protease SBT1.5"/>
    <property type="match status" value="1"/>
</dbReference>
<dbReference type="FunFam" id="3.50.30.30:FF:000005">
    <property type="entry name" value="subtilisin-like protease SBT1.5"/>
    <property type="match status" value="1"/>
</dbReference>
<dbReference type="FunFam" id="3.30.70.80:FF:000002">
    <property type="entry name" value="Subtilisin-like protease SBT5.3"/>
    <property type="match status" value="1"/>
</dbReference>
<dbReference type="Gene3D" id="2.60.40.2310">
    <property type="match status" value="1"/>
</dbReference>
<dbReference type="Gene3D" id="3.50.30.30">
    <property type="match status" value="1"/>
</dbReference>
<dbReference type="Gene3D" id="3.30.70.80">
    <property type="entry name" value="Peptidase S8 propeptide/proteinase inhibitor I9"/>
    <property type="match status" value="1"/>
</dbReference>
<dbReference type="Gene3D" id="3.40.50.200">
    <property type="entry name" value="Peptidase S8/S53 domain"/>
    <property type="match status" value="1"/>
</dbReference>
<dbReference type="InterPro" id="IPR000209">
    <property type="entry name" value="Peptidase_S8/S53_dom"/>
</dbReference>
<dbReference type="InterPro" id="IPR036852">
    <property type="entry name" value="Peptidase_S8/S53_dom_sf"/>
</dbReference>
<dbReference type="InterPro" id="IPR022398">
    <property type="entry name" value="Peptidase_S8_His-AS"/>
</dbReference>
<dbReference type="InterPro" id="IPR023828">
    <property type="entry name" value="Peptidase_S8_Ser-AS"/>
</dbReference>
<dbReference type="InterPro" id="IPR015500">
    <property type="entry name" value="Peptidase_S8_subtilisin-rel"/>
</dbReference>
<dbReference type="InterPro" id="IPR034197">
    <property type="entry name" value="Peptidases_S8_3"/>
</dbReference>
<dbReference type="InterPro" id="IPR010259">
    <property type="entry name" value="S8pro/Inhibitor_I9"/>
</dbReference>
<dbReference type="InterPro" id="IPR037045">
    <property type="entry name" value="S8pro/Inhibitor_I9_sf"/>
</dbReference>
<dbReference type="InterPro" id="IPR045051">
    <property type="entry name" value="SBT"/>
</dbReference>
<dbReference type="InterPro" id="IPR041469">
    <property type="entry name" value="Subtilisin-like_FN3"/>
</dbReference>
<dbReference type="PANTHER" id="PTHR10795">
    <property type="entry name" value="PROPROTEIN CONVERTASE SUBTILISIN/KEXIN"/>
    <property type="match status" value="1"/>
</dbReference>
<dbReference type="Pfam" id="PF17766">
    <property type="entry name" value="fn3_6"/>
    <property type="match status" value="1"/>
</dbReference>
<dbReference type="Pfam" id="PF05922">
    <property type="entry name" value="Inhibitor_I9"/>
    <property type="match status" value="1"/>
</dbReference>
<dbReference type="Pfam" id="PF00082">
    <property type="entry name" value="Peptidase_S8"/>
    <property type="match status" value="1"/>
</dbReference>
<dbReference type="PRINTS" id="PR00723">
    <property type="entry name" value="SUBTILISIN"/>
</dbReference>
<dbReference type="SUPFAM" id="SSF52743">
    <property type="entry name" value="Subtilisin-like"/>
    <property type="match status" value="1"/>
</dbReference>
<dbReference type="PROSITE" id="PS51892">
    <property type="entry name" value="SUBTILASE"/>
    <property type="match status" value="1"/>
</dbReference>
<dbReference type="PROSITE" id="PS00137">
    <property type="entry name" value="SUBTILASE_HIS"/>
    <property type="match status" value="1"/>
</dbReference>
<dbReference type="PROSITE" id="PS00138">
    <property type="entry name" value="SUBTILASE_SER"/>
    <property type="match status" value="1"/>
</dbReference>
<name>SBT33_ARATH</name>
<proteinExistence type="evidence at transcript level"/>
<protein>
    <recommendedName>
        <fullName evidence="5">Subtilisin-like protease SBT3.3</fullName>
        <ecNumber evidence="6">3.4.21.-</ecNumber>
    </recommendedName>
    <alternativeName>
        <fullName evidence="5">Subtilase subfamily 3 member 3</fullName>
        <shortName evidence="5">AtSBT3.3</shortName>
    </alternativeName>
</protein>
<organism>
    <name type="scientific">Arabidopsis thaliana</name>
    <name type="common">Mouse-ear cress</name>
    <dbReference type="NCBI Taxonomy" id="3702"/>
    <lineage>
        <taxon>Eukaryota</taxon>
        <taxon>Viridiplantae</taxon>
        <taxon>Streptophyta</taxon>
        <taxon>Embryophyta</taxon>
        <taxon>Tracheophyta</taxon>
        <taxon>Spermatophyta</taxon>
        <taxon>Magnoliopsida</taxon>
        <taxon>eudicotyledons</taxon>
        <taxon>Gunneridae</taxon>
        <taxon>Pentapetalae</taxon>
        <taxon>rosids</taxon>
        <taxon>malvids</taxon>
        <taxon>Brassicales</taxon>
        <taxon>Brassicaceae</taxon>
        <taxon>Camelineae</taxon>
        <taxon>Arabidopsis</taxon>
    </lineage>
</organism>